<keyword id="KW-0997">Cell inner membrane</keyword>
<keyword id="KW-1003">Cell membrane</keyword>
<keyword id="KW-0406">Ion transport</keyword>
<keyword id="KW-0472">Membrane</keyword>
<keyword id="KW-0520">NAD</keyword>
<keyword id="KW-1185">Reference proteome</keyword>
<keyword id="KW-0915">Sodium</keyword>
<keyword id="KW-0739">Sodium transport</keyword>
<keyword id="KW-1278">Translocase</keyword>
<keyword id="KW-0812">Transmembrane</keyword>
<keyword id="KW-1133">Transmembrane helix</keyword>
<keyword id="KW-0813">Transport</keyword>
<keyword id="KW-0830">Ubiquinone</keyword>
<feature type="chain" id="PRO_0000214254" description="Na(+)-translocating NADH-quinone reductase subunit E">
    <location>
        <begin position="1"/>
        <end position="197"/>
    </location>
</feature>
<feature type="transmembrane region" description="Helical" evidence="1">
    <location>
        <begin position="11"/>
        <end position="31"/>
    </location>
</feature>
<feature type="transmembrane region" description="Helical" evidence="1">
    <location>
        <begin position="35"/>
        <end position="55"/>
    </location>
</feature>
<feature type="transmembrane region" description="Helical" evidence="1">
    <location>
        <begin position="76"/>
        <end position="96"/>
    </location>
</feature>
<feature type="transmembrane region" description="Helical" evidence="1">
    <location>
        <begin position="108"/>
        <end position="128"/>
    </location>
</feature>
<feature type="transmembrane region" description="Helical" evidence="1">
    <location>
        <begin position="139"/>
        <end position="159"/>
    </location>
</feature>
<feature type="transmembrane region" description="Helical" evidence="1">
    <location>
        <begin position="175"/>
        <end position="195"/>
    </location>
</feature>
<protein>
    <recommendedName>
        <fullName evidence="1">Na(+)-translocating NADH-quinone reductase subunit E</fullName>
        <shortName evidence="1">Na(+)-NQR subunit E</shortName>
        <shortName evidence="1">Na(+)-translocating NQR subunit E</shortName>
        <ecNumber evidence="1">7.2.1.1</ecNumber>
    </recommendedName>
    <alternativeName>
        <fullName evidence="1">NQR complex subunit E</fullName>
    </alternativeName>
    <alternativeName>
        <fullName evidence="1">NQR-1 subunit E</fullName>
    </alternativeName>
</protein>
<reference key="1">
    <citation type="journal article" date="2000" name="Science">
        <title>Complete genome sequence of Neisseria meningitidis serogroup B strain MC58.</title>
        <authorList>
            <person name="Tettelin H."/>
            <person name="Saunders N.J."/>
            <person name="Heidelberg J.F."/>
            <person name="Jeffries A.C."/>
            <person name="Nelson K.E."/>
            <person name="Eisen J.A."/>
            <person name="Ketchum K.A."/>
            <person name="Hood D.W."/>
            <person name="Peden J.F."/>
            <person name="Dodson R.J."/>
            <person name="Nelson W.C."/>
            <person name="Gwinn M.L."/>
            <person name="DeBoy R.T."/>
            <person name="Peterson J.D."/>
            <person name="Hickey E.K."/>
            <person name="Haft D.H."/>
            <person name="Salzberg S.L."/>
            <person name="White O."/>
            <person name="Fleischmann R.D."/>
            <person name="Dougherty B.A."/>
            <person name="Mason T.M."/>
            <person name="Ciecko A."/>
            <person name="Parksey D.S."/>
            <person name="Blair E."/>
            <person name="Cittone H."/>
            <person name="Clark E.B."/>
            <person name="Cotton M.D."/>
            <person name="Utterback T.R."/>
            <person name="Khouri H.M."/>
            <person name="Qin H."/>
            <person name="Vamathevan J.J."/>
            <person name="Gill J."/>
            <person name="Scarlato V."/>
            <person name="Masignani V."/>
            <person name="Pizza M."/>
            <person name="Grandi G."/>
            <person name="Sun L."/>
            <person name="Smith H.O."/>
            <person name="Fraser C.M."/>
            <person name="Moxon E.R."/>
            <person name="Rappuoli R."/>
            <person name="Venter J.C."/>
        </authorList>
    </citation>
    <scope>NUCLEOTIDE SEQUENCE [LARGE SCALE GENOMIC DNA]</scope>
    <source>
        <strain>ATCC BAA-335 / MC58</strain>
    </source>
</reference>
<comment type="function">
    <text evidence="1">NQR complex catalyzes the reduction of ubiquinone-1 to ubiquinol by two successive reactions, coupled with the transport of Na(+) ions from the cytoplasm to the periplasm. NqrA to NqrE are probably involved in the second step, the conversion of ubisemiquinone to ubiquinol.</text>
</comment>
<comment type="catalytic activity">
    <reaction evidence="1">
        <text>a ubiquinone + n Na(+)(in) + NADH + H(+) = a ubiquinol + n Na(+)(out) + NAD(+)</text>
        <dbReference type="Rhea" id="RHEA:47748"/>
        <dbReference type="Rhea" id="RHEA-COMP:9565"/>
        <dbReference type="Rhea" id="RHEA-COMP:9566"/>
        <dbReference type="ChEBI" id="CHEBI:15378"/>
        <dbReference type="ChEBI" id="CHEBI:16389"/>
        <dbReference type="ChEBI" id="CHEBI:17976"/>
        <dbReference type="ChEBI" id="CHEBI:29101"/>
        <dbReference type="ChEBI" id="CHEBI:57540"/>
        <dbReference type="ChEBI" id="CHEBI:57945"/>
        <dbReference type="EC" id="7.2.1.1"/>
    </reaction>
</comment>
<comment type="subunit">
    <text evidence="1">Composed of six subunits; NqrA, NqrB, NqrC, NqrD, NqrE and NqrF.</text>
</comment>
<comment type="subcellular location">
    <subcellularLocation>
        <location evidence="1">Cell inner membrane</location>
        <topology evidence="1">Multi-pass membrane protein</topology>
    </subcellularLocation>
</comment>
<comment type="similarity">
    <text evidence="1">Belongs to the NqrDE/RnfAE family.</text>
</comment>
<evidence type="ECO:0000255" key="1">
    <source>
        <dbReference type="HAMAP-Rule" id="MF_00429"/>
    </source>
</evidence>
<dbReference type="EC" id="7.2.1.1" evidence="1"/>
<dbReference type="EMBL" id="AE002098">
    <property type="protein sequence ID" value="AAF40993.1"/>
    <property type="molecule type" value="Genomic_DNA"/>
</dbReference>
<dbReference type="PIR" id="H81184">
    <property type="entry name" value="H81184"/>
</dbReference>
<dbReference type="RefSeq" id="NP_273609.1">
    <property type="nucleotide sequence ID" value="NC_003112.2"/>
</dbReference>
<dbReference type="RefSeq" id="WP_002225564.1">
    <property type="nucleotide sequence ID" value="NC_003112.2"/>
</dbReference>
<dbReference type="SMR" id="Q9K0M7"/>
<dbReference type="FunCoup" id="Q9K0M7">
    <property type="interactions" value="46"/>
</dbReference>
<dbReference type="STRING" id="122586.NMB0565"/>
<dbReference type="PaxDb" id="122586-NMB0565"/>
<dbReference type="KEGG" id="nme:NMB0565"/>
<dbReference type="PATRIC" id="fig|122586.8.peg.724"/>
<dbReference type="HOGENOM" id="CLU_095255_0_0_4"/>
<dbReference type="InParanoid" id="Q9K0M7"/>
<dbReference type="OrthoDB" id="9803631at2"/>
<dbReference type="Proteomes" id="UP000000425">
    <property type="component" value="Chromosome"/>
</dbReference>
<dbReference type="GO" id="GO:0009276">
    <property type="term" value="C:Gram-negative-bacterium-type cell wall"/>
    <property type="evidence" value="ECO:0007669"/>
    <property type="project" value="InterPro"/>
</dbReference>
<dbReference type="GO" id="GO:0005886">
    <property type="term" value="C:plasma membrane"/>
    <property type="evidence" value="ECO:0000318"/>
    <property type="project" value="GO_Central"/>
</dbReference>
<dbReference type="GO" id="GO:0016655">
    <property type="term" value="F:oxidoreductase activity, acting on NAD(P)H, quinone or similar compound as acceptor"/>
    <property type="evidence" value="ECO:0007669"/>
    <property type="project" value="UniProtKB-UniRule"/>
</dbReference>
<dbReference type="GO" id="GO:0022904">
    <property type="term" value="P:respiratory electron transport chain"/>
    <property type="evidence" value="ECO:0007669"/>
    <property type="project" value="InterPro"/>
</dbReference>
<dbReference type="GO" id="GO:0006814">
    <property type="term" value="P:sodium ion transport"/>
    <property type="evidence" value="ECO:0007669"/>
    <property type="project" value="UniProtKB-UniRule"/>
</dbReference>
<dbReference type="HAMAP" id="MF_00429">
    <property type="entry name" value="NqrE"/>
    <property type="match status" value="1"/>
</dbReference>
<dbReference type="InterPro" id="IPR003667">
    <property type="entry name" value="NqrDE/RnfAE"/>
</dbReference>
<dbReference type="InterPro" id="IPR050133">
    <property type="entry name" value="NqrDE/RnfAE_oxidrdctase"/>
</dbReference>
<dbReference type="InterPro" id="IPR010967">
    <property type="entry name" value="NqrE"/>
</dbReference>
<dbReference type="NCBIfam" id="TIGR01940">
    <property type="entry name" value="nqrE"/>
    <property type="match status" value="1"/>
</dbReference>
<dbReference type="PANTHER" id="PTHR30335">
    <property type="entry name" value="INTEGRAL MEMBRANE PROTEIN OF SOXR-REDUCING COMPLEX"/>
    <property type="match status" value="1"/>
</dbReference>
<dbReference type="PANTHER" id="PTHR30335:SF1">
    <property type="entry name" value="NA(+)-TRANSLOCATING NADH-QUINONE REDUCTASE SUBUNIT E"/>
    <property type="match status" value="1"/>
</dbReference>
<dbReference type="Pfam" id="PF02508">
    <property type="entry name" value="Rnf-Nqr"/>
    <property type="match status" value="1"/>
</dbReference>
<dbReference type="PIRSF" id="PIRSF006102">
    <property type="entry name" value="NQR_DE"/>
    <property type="match status" value="1"/>
</dbReference>
<gene>
    <name evidence="1" type="primary">nqrE</name>
    <name type="ordered locus">NMB0565</name>
</gene>
<proteinExistence type="inferred from homology"/>
<accession>Q9K0M7</accession>
<name>NQRE_NEIMB</name>
<organism>
    <name type="scientific">Neisseria meningitidis serogroup B (strain ATCC BAA-335 / MC58)</name>
    <dbReference type="NCBI Taxonomy" id="122586"/>
    <lineage>
        <taxon>Bacteria</taxon>
        <taxon>Pseudomonadati</taxon>
        <taxon>Pseudomonadota</taxon>
        <taxon>Betaproteobacteria</taxon>
        <taxon>Neisseriales</taxon>
        <taxon>Neisseriaceae</taxon>
        <taxon>Neisseria</taxon>
    </lineage>
</organism>
<sequence length="197" mass="21179">MEHYLSLFIKSVFIENMALSFFLGMCTFLAVSKKVSTAFGLGVAVIFVLGLSVPVNQLVYSLLKDGAIAEGVDLTFLKFITFIGVIAALVQILEMFLDKFVPALYNALGIYLPLITVNCAIFGAVSFMAQREYNFGESVVYGFGAGLGWMLAIVALAGITEKMKYSDAPKGLKGLGITFIAAGLMAMAFMSFSGIQL</sequence>